<organismHost>
    <name type="scientific">Gallus gallus</name>
    <name type="common">Chicken</name>
    <dbReference type="NCBI Taxonomy" id="9031"/>
</organismHost>
<reference key="1">
    <citation type="journal article" date="2000" name="Arch. Virol.">
        <title>Evidence of genetic diversity generated by recombination among avian coronavirus IBV.</title>
        <authorList>
            <person name="Lee C.-W."/>
            <person name="Jackwood M.W."/>
        </authorList>
    </citation>
    <scope>NUCLEOTIDE SEQUENCE</scope>
</reference>
<reference key="2">
    <citation type="submission" date="2000-07" db="EMBL/GenBank/DDBJ databases">
        <title>Comparisons of the membrane protein genes of various strains of avian infectious bronchitis virus.</title>
        <authorList>
            <person name="Brooks J.E."/>
            <person name="Rainer A.C."/>
            <person name="Parr R.L."/>
            <person name="Collisson E.W."/>
        </authorList>
    </citation>
    <scope>NUCLEOTIDE SEQUENCE</scope>
</reference>
<sequence length="223" mass="25171">MAENCTLDSEQAVLLFKEYNLFITAFLLFLTILLQYGYATRSRTIYILKMIVLWCFWPLNIAVGVISCIYPPNTGGLVAAIILTVFACLSFVGYWIQSCRLFKRCRSWWSFNPESNAVGSILLTNGQQCNFAIESVPMVLAPIIKNGVLYCEGQWLAKCEPDHLPKDIFVCTPDRRNIYRMVQKYTGDQSGNKKRFATFVYAKQSVDTGELESVATGGSSLYT</sequence>
<organism>
    <name type="scientific">Avian infectious bronchitis virus (strain Gray)</name>
    <name type="common">IBV</name>
    <dbReference type="NCBI Taxonomy" id="31624"/>
    <lineage>
        <taxon>Viruses</taxon>
        <taxon>Riboviria</taxon>
        <taxon>Orthornavirae</taxon>
        <taxon>Pisuviricota</taxon>
        <taxon>Pisoniviricetes</taxon>
        <taxon>Nidovirales</taxon>
        <taxon>Cornidovirineae</taxon>
        <taxon>Coronaviridae</taxon>
        <taxon>Orthocoronavirinae</taxon>
        <taxon>Gammacoronavirus</taxon>
        <taxon>Igacovirus</taxon>
        <taxon>Avian coronavirus</taxon>
    </lineage>
</organism>
<accession>Q910E2</accession>
<gene>
    <name evidence="1" type="primary">M</name>
</gene>
<evidence type="ECO:0000255" key="1">
    <source>
        <dbReference type="HAMAP-Rule" id="MF_04203"/>
    </source>
</evidence>
<evidence type="ECO:0000255" key="2">
    <source>
        <dbReference type="PROSITE-ProRule" id="PRU01275"/>
    </source>
</evidence>
<comment type="function">
    <text evidence="1 2">Component of the viral envelope that plays a central role in virus morphogenesis and assembly via its interactions with other viral proteins.</text>
</comment>
<comment type="subunit">
    <text evidence="1 2">Homomultimer. Interacts with envelope E protein in the budding compartment of the host cell, which is located between endoplasmic reticulum and the Golgi complex. Forms a complex with HE and S proteins. Interacts with nucleocapsid N protein. This interaction probably participates in RNA packaging into the virus.</text>
</comment>
<comment type="subcellular location">
    <subcellularLocation>
        <location evidence="1">Virion membrane</location>
        <topology evidence="1">Multi-pass membrane protein</topology>
    </subcellularLocation>
    <subcellularLocation>
        <location evidence="1">Host Golgi apparatus membrane</location>
        <topology evidence="1">Multi-pass membrane protein</topology>
    </subcellularLocation>
    <text evidence="1">Largely embedded in the lipid bilayer.</text>
</comment>
<comment type="similarity">
    <text evidence="1">Belongs to the gammacoronaviruses M protein family.</text>
</comment>
<keyword id="KW-0325">Glycoprotein</keyword>
<keyword id="KW-1040">Host Golgi apparatus</keyword>
<keyword id="KW-1043">Host membrane</keyword>
<keyword id="KW-0472">Membrane</keyword>
<keyword id="KW-0812">Transmembrane</keyword>
<keyword id="KW-1133">Transmembrane helix</keyword>
<keyword id="KW-0261">Viral envelope protein</keyword>
<keyword id="KW-0468">Viral matrix protein</keyword>
<keyword id="KW-0946">Virion</keyword>
<proteinExistence type="evidence at transcript level"/>
<dbReference type="EMBL" id="AF363607">
    <property type="protein sequence ID" value="AAK50034.1"/>
    <property type="molecule type" value="Genomic_RNA"/>
</dbReference>
<dbReference type="EMBL" id="AF286180">
    <property type="protein sequence ID" value="AAK83026.1"/>
    <property type="molecule type" value="mRNA"/>
</dbReference>
<dbReference type="SMR" id="Q910E2"/>
<dbReference type="GO" id="GO:0044178">
    <property type="term" value="C:host cell Golgi membrane"/>
    <property type="evidence" value="ECO:0007669"/>
    <property type="project" value="UniProtKB-SubCell"/>
</dbReference>
<dbReference type="GO" id="GO:0016020">
    <property type="term" value="C:membrane"/>
    <property type="evidence" value="ECO:0007669"/>
    <property type="project" value="UniProtKB-UniRule"/>
</dbReference>
<dbReference type="GO" id="GO:0019031">
    <property type="term" value="C:viral envelope"/>
    <property type="evidence" value="ECO:0007669"/>
    <property type="project" value="UniProtKB-UniRule"/>
</dbReference>
<dbReference type="GO" id="GO:0055036">
    <property type="term" value="C:virion membrane"/>
    <property type="evidence" value="ECO:0007669"/>
    <property type="project" value="UniProtKB-SubCell"/>
</dbReference>
<dbReference type="GO" id="GO:0039660">
    <property type="term" value="F:structural constituent of virion"/>
    <property type="evidence" value="ECO:0007669"/>
    <property type="project" value="UniProtKB-UniRule"/>
</dbReference>
<dbReference type="CDD" id="cd21566">
    <property type="entry name" value="gammaCoV_M"/>
    <property type="match status" value="1"/>
</dbReference>
<dbReference type="HAMAP" id="MF_04203">
    <property type="entry name" value="GAMMA_CORONA_M"/>
    <property type="match status" value="1"/>
</dbReference>
<dbReference type="InterPro" id="IPR042550">
    <property type="entry name" value="GAMMA_CORONA_M"/>
</dbReference>
<dbReference type="InterPro" id="IPR002574">
    <property type="entry name" value="M_CoV"/>
</dbReference>
<dbReference type="Pfam" id="PF01635">
    <property type="entry name" value="CoV_M"/>
    <property type="match status" value="1"/>
</dbReference>
<dbReference type="PROSITE" id="PS51927">
    <property type="entry name" value="COV_M"/>
    <property type="match status" value="1"/>
</dbReference>
<name>VME1_IBVG</name>
<feature type="chain" id="PRO_0000106055" description="Membrane protein">
    <location>
        <begin position="1"/>
        <end position="223"/>
    </location>
</feature>
<feature type="topological domain" description="Virion surface" evidence="1">
    <location>
        <begin position="1"/>
        <end position="18"/>
    </location>
</feature>
<feature type="transmembrane region" description="Helical" evidence="1">
    <location>
        <begin position="19"/>
        <end position="39"/>
    </location>
</feature>
<feature type="topological domain" description="Intravirion" evidence="1">
    <location>
        <begin position="40"/>
        <end position="49"/>
    </location>
</feature>
<feature type="transmembrane region" description="Helical" evidence="1">
    <location>
        <begin position="50"/>
        <end position="70"/>
    </location>
</feature>
<feature type="topological domain" description="Virion surface" evidence="1">
    <location>
        <begin position="71"/>
        <end position="75"/>
    </location>
</feature>
<feature type="transmembrane region" description="Helical" evidence="1">
    <location>
        <begin position="76"/>
        <end position="96"/>
    </location>
</feature>
<feature type="topological domain" description="Intravirion" evidence="1">
    <location>
        <begin position="97"/>
        <end position="223"/>
    </location>
</feature>
<protein>
    <recommendedName>
        <fullName evidence="1">Membrane protein</fullName>
        <shortName evidence="1">M protein</shortName>
    </recommendedName>
    <alternativeName>
        <fullName evidence="1">E1 glycoprotein</fullName>
    </alternativeName>
    <alternativeName>
        <fullName evidence="1">Matrix glycoprotein</fullName>
    </alternativeName>
    <alternativeName>
        <fullName evidence="1">Membrane glycoprotein</fullName>
    </alternativeName>
</protein>